<gene>
    <name evidence="1" type="primary">prmA</name>
    <name type="ordered locus">lwe1486</name>
</gene>
<dbReference type="EC" id="2.1.1.-" evidence="1"/>
<dbReference type="EMBL" id="AM263198">
    <property type="protein sequence ID" value="CAK20904.1"/>
    <property type="molecule type" value="Genomic_DNA"/>
</dbReference>
<dbReference type="RefSeq" id="WP_011702277.1">
    <property type="nucleotide sequence ID" value="NC_008555.1"/>
</dbReference>
<dbReference type="SMR" id="A0AIS2"/>
<dbReference type="STRING" id="386043.lwe1486"/>
<dbReference type="GeneID" id="61189362"/>
<dbReference type="KEGG" id="lwe:lwe1486"/>
<dbReference type="eggNOG" id="COG2264">
    <property type="taxonomic scope" value="Bacteria"/>
</dbReference>
<dbReference type="HOGENOM" id="CLU_049382_0_1_9"/>
<dbReference type="OrthoDB" id="9785995at2"/>
<dbReference type="Proteomes" id="UP000000779">
    <property type="component" value="Chromosome"/>
</dbReference>
<dbReference type="GO" id="GO:0005737">
    <property type="term" value="C:cytoplasm"/>
    <property type="evidence" value="ECO:0007669"/>
    <property type="project" value="UniProtKB-SubCell"/>
</dbReference>
<dbReference type="GO" id="GO:0016279">
    <property type="term" value="F:protein-lysine N-methyltransferase activity"/>
    <property type="evidence" value="ECO:0007669"/>
    <property type="project" value="RHEA"/>
</dbReference>
<dbReference type="GO" id="GO:0032259">
    <property type="term" value="P:methylation"/>
    <property type="evidence" value="ECO:0007669"/>
    <property type="project" value="UniProtKB-KW"/>
</dbReference>
<dbReference type="CDD" id="cd02440">
    <property type="entry name" value="AdoMet_MTases"/>
    <property type="match status" value="1"/>
</dbReference>
<dbReference type="Gene3D" id="3.40.50.150">
    <property type="entry name" value="Vaccinia Virus protein VP39"/>
    <property type="match status" value="1"/>
</dbReference>
<dbReference type="HAMAP" id="MF_00735">
    <property type="entry name" value="Methyltr_PrmA"/>
    <property type="match status" value="1"/>
</dbReference>
<dbReference type="InterPro" id="IPR050078">
    <property type="entry name" value="Ribosomal_L11_MeTrfase_PrmA"/>
</dbReference>
<dbReference type="InterPro" id="IPR004498">
    <property type="entry name" value="Ribosomal_PrmA_MeTrfase"/>
</dbReference>
<dbReference type="InterPro" id="IPR029063">
    <property type="entry name" value="SAM-dependent_MTases_sf"/>
</dbReference>
<dbReference type="NCBIfam" id="TIGR00406">
    <property type="entry name" value="prmA"/>
    <property type="match status" value="1"/>
</dbReference>
<dbReference type="PANTHER" id="PTHR43648">
    <property type="entry name" value="ELECTRON TRANSFER FLAVOPROTEIN BETA SUBUNIT LYSINE METHYLTRANSFERASE"/>
    <property type="match status" value="1"/>
</dbReference>
<dbReference type="PANTHER" id="PTHR43648:SF1">
    <property type="entry name" value="ELECTRON TRANSFER FLAVOPROTEIN BETA SUBUNIT LYSINE METHYLTRANSFERASE"/>
    <property type="match status" value="1"/>
</dbReference>
<dbReference type="Pfam" id="PF06325">
    <property type="entry name" value="PrmA"/>
    <property type="match status" value="1"/>
</dbReference>
<dbReference type="PIRSF" id="PIRSF000401">
    <property type="entry name" value="RPL11_MTase"/>
    <property type="match status" value="1"/>
</dbReference>
<dbReference type="SUPFAM" id="SSF53335">
    <property type="entry name" value="S-adenosyl-L-methionine-dependent methyltransferases"/>
    <property type="match status" value="1"/>
</dbReference>
<evidence type="ECO:0000255" key="1">
    <source>
        <dbReference type="HAMAP-Rule" id="MF_00735"/>
    </source>
</evidence>
<name>PRMA_LISW6</name>
<accession>A0AIS2</accession>
<reference key="1">
    <citation type="journal article" date="2006" name="J. Bacteriol.">
        <title>Whole-genome sequence of Listeria welshimeri reveals common steps in genome reduction with Listeria innocua as compared to Listeria monocytogenes.</title>
        <authorList>
            <person name="Hain T."/>
            <person name="Steinweg C."/>
            <person name="Kuenne C.T."/>
            <person name="Billion A."/>
            <person name="Ghai R."/>
            <person name="Chatterjee S.S."/>
            <person name="Domann E."/>
            <person name="Kaerst U."/>
            <person name="Goesmann A."/>
            <person name="Bekel T."/>
            <person name="Bartels D."/>
            <person name="Kaiser O."/>
            <person name="Meyer F."/>
            <person name="Puehler A."/>
            <person name="Weisshaar B."/>
            <person name="Wehland J."/>
            <person name="Liang C."/>
            <person name="Dandekar T."/>
            <person name="Lampidis R."/>
            <person name="Kreft J."/>
            <person name="Goebel W."/>
            <person name="Chakraborty T."/>
        </authorList>
    </citation>
    <scope>NUCLEOTIDE SEQUENCE [LARGE SCALE GENOMIC DNA]</scope>
    <source>
        <strain>ATCC 35897 / DSM 20650 / CCUG 15529 / CIP 8149 / NCTC 11857 / SLCC 5334 / V8</strain>
    </source>
</reference>
<feature type="chain" id="PRO_1000046044" description="Ribosomal protein L11 methyltransferase">
    <location>
        <begin position="1"/>
        <end position="314"/>
    </location>
</feature>
<feature type="binding site" evidence="1">
    <location>
        <position position="161"/>
    </location>
    <ligand>
        <name>S-adenosyl-L-methionine</name>
        <dbReference type="ChEBI" id="CHEBI:59789"/>
    </ligand>
</feature>
<feature type="binding site" evidence="1">
    <location>
        <position position="182"/>
    </location>
    <ligand>
        <name>S-adenosyl-L-methionine</name>
        <dbReference type="ChEBI" id="CHEBI:59789"/>
    </ligand>
</feature>
<feature type="binding site" evidence="1">
    <location>
        <position position="204"/>
    </location>
    <ligand>
        <name>S-adenosyl-L-methionine</name>
        <dbReference type="ChEBI" id="CHEBI:59789"/>
    </ligand>
</feature>
<feature type="binding site" evidence="1">
    <location>
        <position position="248"/>
    </location>
    <ligand>
        <name>S-adenosyl-L-methionine</name>
        <dbReference type="ChEBI" id="CHEBI:59789"/>
    </ligand>
</feature>
<keyword id="KW-0963">Cytoplasm</keyword>
<keyword id="KW-0489">Methyltransferase</keyword>
<keyword id="KW-0949">S-adenosyl-L-methionine</keyword>
<keyword id="KW-0808">Transferase</keyword>
<protein>
    <recommendedName>
        <fullName evidence="1">Ribosomal protein L11 methyltransferase</fullName>
        <shortName evidence="1">L11 Mtase</shortName>
        <ecNumber evidence="1">2.1.1.-</ecNumber>
    </recommendedName>
</protein>
<comment type="function">
    <text evidence="1">Methylates ribosomal protein L11.</text>
</comment>
<comment type="catalytic activity">
    <reaction evidence="1">
        <text>L-lysyl-[protein] + 3 S-adenosyl-L-methionine = N(6),N(6),N(6)-trimethyl-L-lysyl-[protein] + 3 S-adenosyl-L-homocysteine + 3 H(+)</text>
        <dbReference type="Rhea" id="RHEA:54192"/>
        <dbReference type="Rhea" id="RHEA-COMP:9752"/>
        <dbReference type="Rhea" id="RHEA-COMP:13826"/>
        <dbReference type="ChEBI" id="CHEBI:15378"/>
        <dbReference type="ChEBI" id="CHEBI:29969"/>
        <dbReference type="ChEBI" id="CHEBI:57856"/>
        <dbReference type="ChEBI" id="CHEBI:59789"/>
        <dbReference type="ChEBI" id="CHEBI:61961"/>
    </reaction>
</comment>
<comment type="subcellular location">
    <subcellularLocation>
        <location evidence="1">Cytoplasm</location>
    </subcellularLocation>
</comment>
<comment type="similarity">
    <text evidence="1">Belongs to the methyltransferase superfamily. PrmA family.</text>
</comment>
<sequence length="314" mass="34848">MEWSEVEVHTTNEAVEPVANVLTEFGAAGVSIEDVADFLREREDKFGEIYALKREDYPEDGVIIKAYFLKTAEFVEQIPEIEKTLKNLTTFDIPLGKFQFVVNDVDDEEWATAWKKYYHPVQITDRITIVPSWESYTPSANEIIIELDPGMAFGTGTHPTTQLCIRALSDYLQPNDEIIDVGTGSGVLSIASAKLGAKSVLATDLDEIATRAAEENIILNKTEHIITVKQNNLLQDINKTNVDIVVANILAEVILLFPEDVYRALKPGGIFIASGIIEDKAKVVEEALKNAGLVIEKIEQQGDWVAIISKRGVE</sequence>
<proteinExistence type="inferred from homology"/>
<organism>
    <name type="scientific">Listeria welshimeri serovar 6b (strain ATCC 35897 / DSM 20650 / CCUG 15529 / CIP 8149 / NCTC 11857 / SLCC 5334 / V8)</name>
    <dbReference type="NCBI Taxonomy" id="386043"/>
    <lineage>
        <taxon>Bacteria</taxon>
        <taxon>Bacillati</taxon>
        <taxon>Bacillota</taxon>
        <taxon>Bacilli</taxon>
        <taxon>Bacillales</taxon>
        <taxon>Listeriaceae</taxon>
        <taxon>Listeria</taxon>
    </lineage>
</organism>